<comment type="catalytic activity">
    <reaction evidence="1">
        <text>tRNA(Arg) + L-arginine + ATP = L-arginyl-tRNA(Arg) + AMP + diphosphate</text>
        <dbReference type="Rhea" id="RHEA:20301"/>
        <dbReference type="Rhea" id="RHEA-COMP:9658"/>
        <dbReference type="Rhea" id="RHEA-COMP:9673"/>
        <dbReference type="ChEBI" id="CHEBI:30616"/>
        <dbReference type="ChEBI" id="CHEBI:32682"/>
        <dbReference type="ChEBI" id="CHEBI:33019"/>
        <dbReference type="ChEBI" id="CHEBI:78442"/>
        <dbReference type="ChEBI" id="CHEBI:78513"/>
        <dbReference type="ChEBI" id="CHEBI:456215"/>
        <dbReference type="EC" id="6.1.1.19"/>
    </reaction>
</comment>
<comment type="subunit">
    <text evidence="1">Monomer.</text>
</comment>
<comment type="subcellular location">
    <subcellularLocation>
        <location evidence="1">Cytoplasm</location>
    </subcellularLocation>
</comment>
<comment type="similarity">
    <text evidence="1">Belongs to the class-I aminoacyl-tRNA synthetase family.</text>
</comment>
<keyword id="KW-0030">Aminoacyl-tRNA synthetase</keyword>
<keyword id="KW-0067">ATP-binding</keyword>
<keyword id="KW-0963">Cytoplasm</keyword>
<keyword id="KW-0436">Ligase</keyword>
<keyword id="KW-0547">Nucleotide-binding</keyword>
<keyword id="KW-0648">Protein biosynthesis</keyword>
<keyword id="KW-1185">Reference proteome</keyword>
<feature type="chain" id="PRO_1000018080" description="Arginine--tRNA ligase">
    <location>
        <begin position="1"/>
        <end position="566"/>
    </location>
</feature>
<feature type="short sequence motif" description="'HIGH' region">
    <location>
        <begin position="121"/>
        <end position="131"/>
    </location>
</feature>
<dbReference type="EC" id="6.1.1.19" evidence="1"/>
<dbReference type="EMBL" id="CP000411">
    <property type="protein sequence ID" value="ABJ56816.1"/>
    <property type="molecule type" value="Genomic_DNA"/>
</dbReference>
<dbReference type="RefSeq" id="WP_011677572.1">
    <property type="nucleotide sequence ID" value="NC_008528.1"/>
</dbReference>
<dbReference type="SMR" id="Q04FF6"/>
<dbReference type="STRING" id="203123.OEOE_0899"/>
<dbReference type="KEGG" id="ooe:OEOE_0899"/>
<dbReference type="PATRIC" id="fig|203123.7.peg.913"/>
<dbReference type="eggNOG" id="COG0018">
    <property type="taxonomic scope" value="Bacteria"/>
</dbReference>
<dbReference type="HOGENOM" id="CLU_006406_6_1_9"/>
<dbReference type="Proteomes" id="UP000000774">
    <property type="component" value="Chromosome"/>
</dbReference>
<dbReference type="GO" id="GO:0005737">
    <property type="term" value="C:cytoplasm"/>
    <property type="evidence" value="ECO:0007669"/>
    <property type="project" value="UniProtKB-SubCell"/>
</dbReference>
<dbReference type="GO" id="GO:0004814">
    <property type="term" value="F:arginine-tRNA ligase activity"/>
    <property type="evidence" value="ECO:0007669"/>
    <property type="project" value="UniProtKB-UniRule"/>
</dbReference>
<dbReference type="GO" id="GO:0005524">
    <property type="term" value="F:ATP binding"/>
    <property type="evidence" value="ECO:0007669"/>
    <property type="project" value="UniProtKB-UniRule"/>
</dbReference>
<dbReference type="GO" id="GO:0006420">
    <property type="term" value="P:arginyl-tRNA aminoacylation"/>
    <property type="evidence" value="ECO:0007669"/>
    <property type="project" value="UniProtKB-UniRule"/>
</dbReference>
<dbReference type="CDD" id="cd07956">
    <property type="entry name" value="Anticodon_Ia_Arg"/>
    <property type="match status" value="1"/>
</dbReference>
<dbReference type="CDD" id="cd00671">
    <property type="entry name" value="ArgRS_core"/>
    <property type="match status" value="1"/>
</dbReference>
<dbReference type="FunFam" id="3.40.50.620:FF:000116">
    <property type="entry name" value="Arginine--tRNA ligase"/>
    <property type="match status" value="1"/>
</dbReference>
<dbReference type="FunFam" id="1.10.730.10:FF:000006">
    <property type="entry name" value="Arginyl-tRNA synthetase 2, mitochondrial"/>
    <property type="match status" value="1"/>
</dbReference>
<dbReference type="Gene3D" id="3.30.1360.70">
    <property type="entry name" value="Arginyl tRNA synthetase N-terminal domain"/>
    <property type="match status" value="1"/>
</dbReference>
<dbReference type="Gene3D" id="3.40.50.620">
    <property type="entry name" value="HUPs"/>
    <property type="match status" value="1"/>
</dbReference>
<dbReference type="Gene3D" id="1.10.730.10">
    <property type="entry name" value="Isoleucyl-tRNA Synthetase, Domain 1"/>
    <property type="match status" value="1"/>
</dbReference>
<dbReference type="HAMAP" id="MF_00123">
    <property type="entry name" value="Arg_tRNA_synth"/>
    <property type="match status" value="1"/>
</dbReference>
<dbReference type="InterPro" id="IPR001278">
    <property type="entry name" value="Arg-tRNA-ligase"/>
</dbReference>
<dbReference type="InterPro" id="IPR005148">
    <property type="entry name" value="Arg-tRNA-synth_N"/>
</dbReference>
<dbReference type="InterPro" id="IPR036695">
    <property type="entry name" value="Arg-tRNA-synth_N_sf"/>
</dbReference>
<dbReference type="InterPro" id="IPR035684">
    <property type="entry name" value="ArgRS_core"/>
</dbReference>
<dbReference type="InterPro" id="IPR008909">
    <property type="entry name" value="DALR_anticod-bd"/>
</dbReference>
<dbReference type="InterPro" id="IPR014729">
    <property type="entry name" value="Rossmann-like_a/b/a_fold"/>
</dbReference>
<dbReference type="InterPro" id="IPR009080">
    <property type="entry name" value="tRNAsynth_Ia_anticodon-bd"/>
</dbReference>
<dbReference type="NCBIfam" id="TIGR00456">
    <property type="entry name" value="argS"/>
    <property type="match status" value="1"/>
</dbReference>
<dbReference type="PANTHER" id="PTHR11956:SF5">
    <property type="entry name" value="ARGININE--TRNA LIGASE, CYTOPLASMIC"/>
    <property type="match status" value="1"/>
</dbReference>
<dbReference type="PANTHER" id="PTHR11956">
    <property type="entry name" value="ARGINYL-TRNA SYNTHETASE"/>
    <property type="match status" value="1"/>
</dbReference>
<dbReference type="Pfam" id="PF03485">
    <property type="entry name" value="Arg_tRNA_synt_N"/>
    <property type="match status" value="1"/>
</dbReference>
<dbReference type="Pfam" id="PF05746">
    <property type="entry name" value="DALR_1"/>
    <property type="match status" value="1"/>
</dbReference>
<dbReference type="Pfam" id="PF00750">
    <property type="entry name" value="tRNA-synt_1d"/>
    <property type="match status" value="1"/>
</dbReference>
<dbReference type="PRINTS" id="PR01038">
    <property type="entry name" value="TRNASYNTHARG"/>
</dbReference>
<dbReference type="SMART" id="SM01016">
    <property type="entry name" value="Arg_tRNA_synt_N"/>
    <property type="match status" value="1"/>
</dbReference>
<dbReference type="SMART" id="SM00836">
    <property type="entry name" value="DALR_1"/>
    <property type="match status" value="1"/>
</dbReference>
<dbReference type="SUPFAM" id="SSF47323">
    <property type="entry name" value="Anticodon-binding domain of a subclass of class I aminoacyl-tRNA synthetases"/>
    <property type="match status" value="1"/>
</dbReference>
<dbReference type="SUPFAM" id="SSF55190">
    <property type="entry name" value="Arginyl-tRNA synthetase (ArgRS), N-terminal 'additional' domain"/>
    <property type="match status" value="1"/>
</dbReference>
<dbReference type="SUPFAM" id="SSF52374">
    <property type="entry name" value="Nucleotidylyl transferase"/>
    <property type="match status" value="1"/>
</dbReference>
<proteinExistence type="inferred from homology"/>
<reference key="1">
    <citation type="journal article" date="2006" name="Proc. Natl. Acad. Sci. U.S.A.">
        <title>Comparative genomics of the lactic acid bacteria.</title>
        <authorList>
            <person name="Makarova K.S."/>
            <person name="Slesarev A."/>
            <person name="Wolf Y.I."/>
            <person name="Sorokin A."/>
            <person name="Mirkin B."/>
            <person name="Koonin E.V."/>
            <person name="Pavlov A."/>
            <person name="Pavlova N."/>
            <person name="Karamychev V."/>
            <person name="Polouchine N."/>
            <person name="Shakhova V."/>
            <person name="Grigoriev I."/>
            <person name="Lou Y."/>
            <person name="Rohksar D."/>
            <person name="Lucas S."/>
            <person name="Huang K."/>
            <person name="Goodstein D.M."/>
            <person name="Hawkins T."/>
            <person name="Plengvidhya V."/>
            <person name="Welker D."/>
            <person name="Hughes J."/>
            <person name="Goh Y."/>
            <person name="Benson A."/>
            <person name="Baldwin K."/>
            <person name="Lee J.-H."/>
            <person name="Diaz-Muniz I."/>
            <person name="Dosti B."/>
            <person name="Smeianov V."/>
            <person name="Wechter W."/>
            <person name="Barabote R."/>
            <person name="Lorca G."/>
            <person name="Altermann E."/>
            <person name="Barrangou R."/>
            <person name="Ganesan B."/>
            <person name="Xie Y."/>
            <person name="Rawsthorne H."/>
            <person name="Tamir D."/>
            <person name="Parker C."/>
            <person name="Breidt F."/>
            <person name="Broadbent J.R."/>
            <person name="Hutkins R."/>
            <person name="O'Sullivan D."/>
            <person name="Steele J."/>
            <person name="Unlu G."/>
            <person name="Saier M.H. Jr."/>
            <person name="Klaenhammer T."/>
            <person name="Richardson P."/>
            <person name="Kozyavkin S."/>
            <person name="Weimer B.C."/>
            <person name="Mills D.A."/>
        </authorList>
    </citation>
    <scope>NUCLEOTIDE SEQUENCE [LARGE SCALE GENOMIC DNA]</scope>
    <source>
        <strain>ATCC BAA-331 / PSU-1</strain>
    </source>
</reference>
<accession>Q04FF6</accession>
<evidence type="ECO:0000255" key="1">
    <source>
        <dbReference type="HAMAP-Rule" id="MF_00123"/>
    </source>
</evidence>
<sequence length="566" mass="63619">MNFTHIIAEKINQTLENTFDLDKLEKLVEKPKDLNRGDYAFPTFSLSAKFHEAPQKIALKIADEIDRTNFANVKAVGPYVNFFIQRVEFTNQLLKEILLNDDFGRNNQGAGKKIVIDMSSPNIAKPMSMGHLRSTVIGEAISKIAKANGYQTIKINFLGDWGTQFGLMIAAYKLWGDDKLINKNPVDELVKLYVKINKESETDKSLKDSGRAWFKKLEDGDPEAVKLWNWFKSVSLKEFQEVYDRLGVSFDSMNGEAFYNDKMEPVVKMLASKGLLTESQGAEIVDLPNLLPKDNYPIAMIKRSDGATQYITRDLASAIYRHDAYDFAKSLYVVGAEQKDHFDQMKAILKLAGDDWADDIEHIGFGMITMNGKKMSTRKGNIVPLVDVLDTARQLAAEQISEKNPGLENADHVAEEVGAGAVVFNDLQKDRNLSIDFNLEKIVQFEGDTGPYVQYTHARAMSILRKSGQQAILNTGVTFVDEEAWPIVSRLSAYPEMIKRAWQLREPSIVAKYLLSLARDFNSYYAHTKILVNNEKMQSRLSLVQGVCSVLKSGLNLLGVSAPNQM</sequence>
<name>SYR_OENOB</name>
<protein>
    <recommendedName>
        <fullName evidence="1">Arginine--tRNA ligase</fullName>
        <ecNumber evidence="1">6.1.1.19</ecNumber>
    </recommendedName>
    <alternativeName>
        <fullName evidence="1">Arginyl-tRNA synthetase</fullName>
        <shortName evidence="1">ArgRS</shortName>
    </alternativeName>
</protein>
<organism>
    <name type="scientific">Oenococcus oeni (strain ATCC BAA-331 / PSU-1)</name>
    <dbReference type="NCBI Taxonomy" id="203123"/>
    <lineage>
        <taxon>Bacteria</taxon>
        <taxon>Bacillati</taxon>
        <taxon>Bacillota</taxon>
        <taxon>Bacilli</taxon>
        <taxon>Lactobacillales</taxon>
        <taxon>Lactobacillaceae</taxon>
        <taxon>Oenococcus</taxon>
    </lineage>
</organism>
<gene>
    <name evidence="1" type="primary">argS</name>
    <name type="ordered locus">OEOE_0899</name>
</gene>